<accession>P0AC54</accession>
<accession>P22992</accession>
<accession>P78069</accession>
<accession>Q60134</accession>
<accession>Q60139</accession>
<organism>
    <name type="scientific">Escherichia coli O6:H1 (strain CFT073 / ATCC 700928 / UPEC)</name>
    <dbReference type="NCBI Taxonomy" id="199310"/>
    <lineage>
        <taxon>Bacteria</taxon>
        <taxon>Pseudomonadati</taxon>
        <taxon>Pseudomonadota</taxon>
        <taxon>Gammaproteobacteria</taxon>
        <taxon>Enterobacterales</taxon>
        <taxon>Enterobacteriaceae</taxon>
        <taxon>Escherichia</taxon>
    </lineage>
</organism>
<proteinExistence type="inferred from homology"/>
<dbReference type="EC" id="1.1.1.49" evidence="1"/>
<dbReference type="EMBL" id="AE014075">
    <property type="protein sequence ID" value="AAN80722.1"/>
    <property type="molecule type" value="Genomic_DNA"/>
</dbReference>
<dbReference type="RefSeq" id="WP_000301727.1">
    <property type="nucleotide sequence ID" value="NZ_CP051263.1"/>
</dbReference>
<dbReference type="SMR" id="P0AC54"/>
<dbReference type="STRING" id="199310.c2265"/>
<dbReference type="GeneID" id="86859388"/>
<dbReference type="KEGG" id="ecc:c2265"/>
<dbReference type="eggNOG" id="COG0364">
    <property type="taxonomic scope" value="Bacteria"/>
</dbReference>
<dbReference type="HOGENOM" id="CLU_013524_5_0_6"/>
<dbReference type="BioCyc" id="ECOL199310:C2265-MONOMER"/>
<dbReference type="UniPathway" id="UPA00115">
    <property type="reaction ID" value="UER00408"/>
</dbReference>
<dbReference type="Proteomes" id="UP000001410">
    <property type="component" value="Chromosome"/>
</dbReference>
<dbReference type="GO" id="GO:0005829">
    <property type="term" value="C:cytosol"/>
    <property type="evidence" value="ECO:0007669"/>
    <property type="project" value="TreeGrafter"/>
</dbReference>
<dbReference type="GO" id="GO:0004345">
    <property type="term" value="F:glucose-6-phosphate dehydrogenase activity"/>
    <property type="evidence" value="ECO:0007669"/>
    <property type="project" value="UniProtKB-UniRule"/>
</dbReference>
<dbReference type="GO" id="GO:0050661">
    <property type="term" value="F:NADP binding"/>
    <property type="evidence" value="ECO:0007669"/>
    <property type="project" value="UniProtKB-UniRule"/>
</dbReference>
<dbReference type="GO" id="GO:0006006">
    <property type="term" value="P:glucose metabolic process"/>
    <property type="evidence" value="ECO:0007669"/>
    <property type="project" value="UniProtKB-KW"/>
</dbReference>
<dbReference type="GO" id="GO:0009051">
    <property type="term" value="P:pentose-phosphate shunt, oxidative branch"/>
    <property type="evidence" value="ECO:0007669"/>
    <property type="project" value="TreeGrafter"/>
</dbReference>
<dbReference type="FunFam" id="3.30.360.10:FF:000011">
    <property type="entry name" value="Glucose-6-phosphate 1-dehydrogenase"/>
    <property type="match status" value="1"/>
</dbReference>
<dbReference type="FunFam" id="3.40.50.720:FF:000079">
    <property type="entry name" value="Glucose-6-phosphate 1-dehydrogenase"/>
    <property type="match status" value="1"/>
</dbReference>
<dbReference type="Gene3D" id="3.30.360.10">
    <property type="entry name" value="Dihydrodipicolinate Reductase, domain 2"/>
    <property type="match status" value="1"/>
</dbReference>
<dbReference type="Gene3D" id="3.40.50.720">
    <property type="entry name" value="NAD(P)-binding Rossmann-like Domain"/>
    <property type="match status" value="1"/>
</dbReference>
<dbReference type="HAMAP" id="MF_00966">
    <property type="entry name" value="G6PD"/>
    <property type="match status" value="1"/>
</dbReference>
<dbReference type="InterPro" id="IPR001282">
    <property type="entry name" value="G6P_DH"/>
</dbReference>
<dbReference type="InterPro" id="IPR019796">
    <property type="entry name" value="G6P_DH_AS"/>
</dbReference>
<dbReference type="InterPro" id="IPR022675">
    <property type="entry name" value="G6P_DH_C"/>
</dbReference>
<dbReference type="InterPro" id="IPR022674">
    <property type="entry name" value="G6P_DH_NAD-bd"/>
</dbReference>
<dbReference type="InterPro" id="IPR036291">
    <property type="entry name" value="NAD(P)-bd_dom_sf"/>
</dbReference>
<dbReference type="NCBIfam" id="NF009492">
    <property type="entry name" value="PRK12853.1-3"/>
    <property type="match status" value="1"/>
</dbReference>
<dbReference type="NCBIfam" id="TIGR00871">
    <property type="entry name" value="zwf"/>
    <property type="match status" value="1"/>
</dbReference>
<dbReference type="PANTHER" id="PTHR23429:SF0">
    <property type="entry name" value="GLUCOSE-6-PHOSPHATE 1-DEHYDROGENASE"/>
    <property type="match status" value="1"/>
</dbReference>
<dbReference type="PANTHER" id="PTHR23429">
    <property type="entry name" value="GLUCOSE-6-PHOSPHATE 1-DEHYDROGENASE G6PD"/>
    <property type="match status" value="1"/>
</dbReference>
<dbReference type="Pfam" id="PF02781">
    <property type="entry name" value="G6PD_C"/>
    <property type="match status" value="1"/>
</dbReference>
<dbReference type="Pfam" id="PF00479">
    <property type="entry name" value="G6PD_N"/>
    <property type="match status" value="1"/>
</dbReference>
<dbReference type="PIRSF" id="PIRSF000110">
    <property type="entry name" value="G6PD"/>
    <property type="match status" value="1"/>
</dbReference>
<dbReference type="PRINTS" id="PR00079">
    <property type="entry name" value="G6PDHDRGNASE"/>
</dbReference>
<dbReference type="SUPFAM" id="SSF55347">
    <property type="entry name" value="Glyceraldehyde-3-phosphate dehydrogenase-like, C-terminal domain"/>
    <property type="match status" value="1"/>
</dbReference>
<dbReference type="SUPFAM" id="SSF51735">
    <property type="entry name" value="NAD(P)-binding Rossmann-fold domains"/>
    <property type="match status" value="1"/>
</dbReference>
<dbReference type="PROSITE" id="PS00069">
    <property type="entry name" value="G6P_DEHYDROGENASE"/>
    <property type="match status" value="1"/>
</dbReference>
<evidence type="ECO:0000255" key="1">
    <source>
        <dbReference type="HAMAP-Rule" id="MF_00966"/>
    </source>
</evidence>
<feature type="chain" id="PRO_0000068120" description="Glucose-6-phosphate 1-dehydrogenase">
    <location>
        <begin position="1"/>
        <end position="491"/>
    </location>
</feature>
<feature type="active site" description="Proton acceptor" evidence="1">
    <location>
        <position position="239"/>
    </location>
</feature>
<feature type="binding site" evidence="1">
    <location>
        <position position="50"/>
    </location>
    <ligand>
        <name>NADP(+)</name>
        <dbReference type="ChEBI" id="CHEBI:58349"/>
    </ligand>
</feature>
<feature type="binding site" evidence="1">
    <location>
        <begin position="92"/>
        <end position="93"/>
    </location>
    <ligand>
        <name>NADP(+)</name>
        <dbReference type="ChEBI" id="CHEBI:58349"/>
    </ligand>
</feature>
<feature type="binding site" evidence="1">
    <location>
        <position position="147"/>
    </location>
    <ligand>
        <name>NADP(+)</name>
        <dbReference type="ChEBI" id="CHEBI:58349"/>
    </ligand>
</feature>
<feature type="binding site" evidence="1">
    <location>
        <position position="177"/>
    </location>
    <ligand>
        <name>substrate</name>
    </ligand>
</feature>
<feature type="binding site" evidence="1">
    <location>
        <position position="181"/>
    </location>
    <ligand>
        <name>substrate</name>
    </ligand>
</feature>
<feature type="binding site" evidence="1">
    <location>
        <position position="215"/>
    </location>
    <ligand>
        <name>substrate</name>
    </ligand>
</feature>
<feature type="binding site" evidence="1">
    <location>
        <position position="234"/>
    </location>
    <ligand>
        <name>substrate</name>
    </ligand>
</feature>
<feature type="binding site" evidence="1">
    <location>
        <position position="339"/>
    </location>
    <ligand>
        <name>substrate</name>
    </ligand>
</feature>
<feature type="binding site" evidence="1">
    <location>
        <position position="344"/>
    </location>
    <ligand>
        <name>substrate</name>
    </ligand>
</feature>
<protein>
    <recommendedName>
        <fullName evidence="1">Glucose-6-phosphate 1-dehydrogenase</fullName>
        <shortName evidence="1">G6PD</shortName>
        <ecNumber evidence="1">1.1.1.49</ecNumber>
    </recommendedName>
</protein>
<reference key="1">
    <citation type="journal article" date="2002" name="Proc. Natl. Acad. Sci. U.S.A.">
        <title>Extensive mosaic structure revealed by the complete genome sequence of uropathogenic Escherichia coli.</title>
        <authorList>
            <person name="Welch R.A."/>
            <person name="Burland V."/>
            <person name="Plunkett G. III"/>
            <person name="Redford P."/>
            <person name="Roesch P."/>
            <person name="Rasko D."/>
            <person name="Buckles E.L."/>
            <person name="Liou S.-R."/>
            <person name="Boutin A."/>
            <person name="Hackett J."/>
            <person name="Stroud D."/>
            <person name="Mayhew G.F."/>
            <person name="Rose D.J."/>
            <person name="Zhou S."/>
            <person name="Schwartz D.C."/>
            <person name="Perna N.T."/>
            <person name="Mobley H.L.T."/>
            <person name="Donnenberg M.S."/>
            <person name="Blattner F.R."/>
        </authorList>
    </citation>
    <scope>NUCLEOTIDE SEQUENCE [LARGE SCALE GENOMIC DNA]</scope>
    <source>
        <strain>CFT073 / ATCC 700928 / UPEC</strain>
    </source>
</reference>
<name>G6PD_ECOL6</name>
<sequence length="491" mass="55704">MAVTQTAQACDLVIFGAKGDLARRKLLPSLYQLEKAGQLNPDTRIIGVGRADWDKAAYTKVVREALETFMKETIDEGLWDTLSARLDFCNLDVNDTAAFSRLGAMLDQKNRITINYFAMPPSTFGAICKGLGEAKLNAKPARVVMEKPLGTSLATSQEINDQVGEYFEECQVYRIDHYLGKETVLNLLALRFANSLFVNNWDNRTIDHVEITVAEEVGIEGRWGYFDKAGQMRDMIQNHLLQILCMIAMSPPSDLSADSIRDEKVKVLKSLRRIDRSNVREKTVRGQYTAGFAQGKKVPGYLEEEGANKSSNTETFVAIRVDIDNWRWAGVPFYLRTGKRLPTKCSEVVVYFKTPELNLFKESWQDLPQNKLTIRLQPDEGVDIQVLNKVPGLDHKHNLQITKLDLSYSETFNQTHLADAYERLLLETMRGIQALFVRRDEVEEAWKWVDSITEAWAMDNDAPKPYQAGTWGPVASVAMITRDGRSWNEFE</sequence>
<gene>
    <name evidence="1" type="primary">zwf</name>
    <name type="ordered locus">c2265</name>
</gene>
<comment type="function">
    <text evidence="1">Catalyzes the oxidation of glucose 6-phosphate to 6-phosphogluconolactone.</text>
</comment>
<comment type="catalytic activity">
    <reaction evidence="1">
        <text>D-glucose 6-phosphate + NADP(+) = 6-phospho-D-glucono-1,5-lactone + NADPH + H(+)</text>
        <dbReference type="Rhea" id="RHEA:15841"/>
        <dbReference type="ChEBI" id="CHEBI:15378"/>
        <dbReference type="ChEBI" id="CHEBI:57783"/>
        <dbReference type="ChEBI" id="CHEBI:57955"/>
        <dbReference type="ChEBI" id="CHEBI:58349"/>
        <dbReference type="ChEBI" id="CHEBI:61548"/>
        <dbReference type="EC" id="1.1.1.49"/>
    </reaction>
</comment>
<comment type="pathway">
    <text evidence="1">Carbohydrate degradation; pentose phosphate pathway; D-ribulose 5-phosphate from D-glucose 6-phosphate (oxidative stage): step 1/3.</text>
</comment>
<comment type="similarity">
    <text evidence="1">Belongs to the glucose-6-phosphate dehydrogenase family.</text>
</comment>
<keyword id="KW-0119">Carbohydrate metabolism</keyword>
<keyword id="KW-0313">Glucose metabolism</keyword>
<keyword id="KW-0521">NADP</keyword>
<keyword id="KW-0560">Oxidoreductase</keyword>
<keyword id="KW-1185">Reference proteome</keyword>